<name>DCHM_BPT2</name>
<gene>
    <name type="primary">42</name>
</gene>
<organismHost>
    <name type="scientific">Escherichia coli</name>
    <dbReference type="NCBI Taxonomy" id="562"/>
</organismHost>
<evidence type="ECO:0000255" key="1"/>
<evidence type="ECO:0000305" key="2"/>
<proteinExistence type="inferred from homology"/>
<dbReference type="EC" id="2.1.2.8"/>
<dbReference type="EMBL" id="X68724">
    <property type="protein sequence ID" value="CAA48663.1"/>
    <property type="molecule type" value="Genomic_DNA"/>
</dbReference>
<dbReference type="PIR" id="A34273">
    <property type="entry name" value="SZBPT2"/>
</dbReference>
<dbReference type="SMR" id="P18029"/>
<dbReference type="GO" id="GO:0047153">
    <property type="term" value="F:deoxycytidylate 5-hydroxymethyltransferase activity"/>
    <property type="evidence" value="ECO:0007669"/>
    <property type="project" value="UniProtKB-EC"/>
</dbReference>
<dbReference type="Gene3D" id="3.30.572.10">
    <property type="entry name" value="Thymidylate synthase/dCMP hydroxymethylase domain"/>
    <property type="match status" value="1"/>
</dbReference>
<dbReference type="InterPro" id="IPR014619">
    <property type="entry name" value="Deoxycytidylate_hydroxyMease"/>
</dbReference>
<dbReference type="InterPro" id="IPR023451">
    <property type="entry name" value="Thymidate_synth/dCMP_Mease_dom"/>
</dbReference>
<dbReference type="InterPro" id="IPR036926">
    <property type="entry name" value="Thymidate_synth/dCMP_Mease_sf"/>
</dbReference>
<dbReference type="Pfam" id="PF00303">
    <property type="entry name" value="Thymidylat_synt"/>
    <property type="match status" value="1"/>
</dbReference>
<dbReference type="PIRSF" id="PIRSF036750">
    <property type="entry name" value="dCMP_HMase"/>
    <property type="match status" value="1"/>
</dbReference>
<dbReference type="SUPFAM" id="SSF55831">
    <property type="entry name" value="Thymidylate synthase/dCMP hydroxymethylase"/>
    <property type="match status" value="1"/>
</dbReference>
<comment type="catalytic activity">
    <reaction>
        <text>dCMP + (6R)-5,10-methylene-5,6,7,8-tetrahydrofolate + H2O = 5-hydroxymethyl-dCMP + (6S)-5,6,7,8-tetrahydrofolate</text>
        <dbReference type="Rhea" id="RHEA:11280"/>
        <dbReference type="ChEBI" id="CHEBI:15377"/>
        <dbReference type="ChEBI" id="CHEBI:15636"/>
        <dbReference type="ChEBI" id="CHEBI:57453"/>
        <dbReference type="ChEBI" id="CHEBI:57566"/>
        <dbReference type="ChEBI" id="CHEBI:57962"/>
        <dbReference type="EC" id="2.1.2.8"/>
    </reaction>
</comment>
<comment type="similarity">
    <text evidence="2">Belongs to the thymidylate synthase family.</text>
</comment>
<organism>
    <name type="scientific">Enterobacteria phage T2</name>
    <name type="common">Bacteriophage T2</name>
    <dbReference type="NCBI Taxonomy" id="2060721"/>
    <lineage>
        <taxon>Viruses</taxon>
        <taxon>Duplodnaviria</taxon>
        <taxon>Heunggongvirae</taxon>
        <taxon>Uroviricota</taxon>
        <taxon>Caudoviricetes</taxon>
        <taxon>Straboviridae</taxon>
        <taxon>Tevenvirinae</taxon>
        <taxon>Tequatrovirus</taxon>
        <taxon>Tequatrovirus T2</taxon>
    </lineage>
</organism>
<keyword id="KW-0808">Transferase</keyword>
<sequence>MISDSMTVEEIRLHLGLALKEKDFVVDKTGVKTIEIIGASFVADEPFIFGALNDEYIQRELEWYKSKSLFVKDIPGETPKIWQQVASSKGEINSNYGWAIWSEDNYAQYDMCLAELGQNPDSRRGIMIYTRPSMQFDYNKDGMSDFMCTNTVQYLIRDKKINAVVNMRSNDVVFGFRNDYAWQKYVLDKLVSDLNAGDSTRQYKAGSIIWNVGSLHVYSRHFYLVDHWWNTGETHIVKKDYNGEWK</sequence>
<protein>
    <recommendedName>
        <fullName>Deoxycytidylate 5-hydroxymethyltransferase</fullName>
        <shortName>Deoxycytidylate hydroxymethylase</shortName>
        <ecNumber>2.1.2.8</ecNumber>
    </recommendedName>
    <alternativeName>
        <fullName>dCMP hydroxymethylase</fullName>
    </alternativeName>
</protein>
<feature type="chain" id="PRO_0000141067" description="Deoxycytidylate 5-hydroxymethyltransferase">
    <location>
        <begin position="1"/>
        <end position="246"/>
    </location>
</feature>
<feature type="active site" evidence="1">
    <location>
        <position position="148"/>
    </location>
</feature>
<reference key="1">
    <citation type="journal article" date="1988" name="Eur. J. Biochem.">
        <title>Deoxycytidylate hydroxymethylase gene of bacteriophage T4. Nucleotide sequence determination and over-expression of the gene.</title>
        <authorList>
            <person name="Lamm N."/>
            <person name="Wang Y."/>
            <person name="Mathews C.K."/>
            <person name="Rueger W."/>
        </authorList>
    </citation>
    <scope>NUCLEOTIDE SEQUENCE [GENOMIC DNA]</scope>
</reference>
<reference key="2">
    <citation type="journal article" date="1993" name="Nucleic Acids Res.">
        <title>Cloning and sequencing of the genes of beta-glucosyl-HMC-alpha-glucosyl-transferases of bacteriophages T2 and T6.</title>
        <authorList>
            <person name="Winkler M."/>
            <person name="Rueger W."/>
        </authorList>
    </citation>
    <scope>NUCLEOTIDE SEQUENCE [GENOMIC DNA] OF 218-246</scope>
</reference>
<accession>P18029</accession>